<comment type="function">
    <text evidence="2">Probably has antifungal activity.</text>
</comment>
<comment type="subunit">
    <text evidence="2">May form dimers.</text>
</comment>
<comment type="PTM">
    <text evidence="2">Not glycosylated.</text>
</comment>
<comment type="PTM">
    <text evidence="2">Contains 4 disulfide bonds.</text>
</comment>
<comment type="PTM">
    <text evidence="2">Met-61 and Met-63 might be oxidized in some molecules.</text>
</comment>
<comment type="mass spectrometry" mass="5184.1" method="Electrospray" evidence="2"/>
<comment type="allergen">
    <text evidence="2">Causes an allergic reaction in human. Binds to IgE.</text>
</comment>
<comment type="similarity">
    <text evidence="4">Belongs to the DEFL family.</text>
</comment>
<keyword id="KW-0020">Allergen</keyword>
<keyword id="KW-0929">Antimicrobial</keyword>
<keyword id="KW-0211">Defensin</keyword>
<keyword id="KW-0903">Direct protein sequencing</keyword>
<keyword id="KW-1015">Disulfide bond</keyword>
<keyword id="KW-0295">Fungicide</keyword>
<keyword id="KW-0558">Oxidation</keyword>
<keyword id="KW-0611">Plant defense</keyword>
<keyword id="KW-0732">Signal</keyword>
<dbReference type="EMBL" id="EY396089">
    <property type="status" value="NOT_ANNOTATED_CDS"/>
    <property type="molecule type" value="mRNA"/>
</dbReference>
<dbReference type="SMR" id="B3EWP3"/>
<dbReference type="Allergome" id="10187">
    <property type="allergen name" value="Ara h 12"/>
</dbReference>
<dbReference type="Allergome" id="10188">
    <property type="allergen name" value="Ara h 12.0101"/>
</dbReference>
<dbReference type="GO" id="GO:0050832">
    <property type="term" value="P:defense response to fungus"/>
    <property type="evidence" value="ECO:0007669"/>
    <property type="project" value="UniProtKB-KW"/>
</dbReference>
<dbReference type="GO" id="GO:0031640">
    <property type="term" value="P:killing of cells of another organism"/>
    <property type="evidence" value="ECO:0007669"/>
    <property type="project" value="UniProtKB-KW"/>
</dbReference>
<dbReference type="Gene3D" id="3.30.30.10">
    <property type="entry name" value="Knottin, scorpion toxin-like"/>
    <property type="match status" value="1"/>
</dbReference>
<dbReference type="InterPro" id="IPR008176">
    <property type="entry name" value="Defensin_plant"/>
</dbReference>
<dbReference type="InterPro" id="IPR003614">
    <property type="entry name" value="Scorpion_toxin-like"/>
</dbReference>
<dbReference type="InterPro" id="IPR036574">
    <property type="entry name" value="Scorpion_toxin-like_sf"/>
</dbReference>
<dbReference type="Pfam" id="PF00304">
    <property type="entry name" value="Gamma-thionin"/>
    <property type="match status" value="1"/>
</dbReference>
<dbReference type="SMART" id="SM00505">
    <property type="entry name" value="Knot1"/>
    <property type="match status" value="1"/>
</dbReference>
<dbReference type="SUPFAM" id="SSF57095">
    <property type="entry name" value="Scorpion toxin-like"/>
    <property type="match status" value="1"/>
</dbReference>
<dbReference type="PROSITE" id="PS00940">
    <property type="entry name" value="GAMMA_THIONIN"/>
    <property type="match status" value="1"/>
</dbReference>
<evidence type="ECO:0000250" key="1">
    <source>
        <dbReference type="UniProtKB" id="P81929"/>
    </source>
</evidence>
<evidence type="ECO:0000269" key="2">
    <source>
    </source>
</evidence>
<evidence type="ECO:0000303" key="3">
    <source>
    </source>
</evidence>
<evidence type="ECO:0000305" key="4"/>
<evidence type="ECO:0000305" key="5">
    <source>
    </source>
</evidence>
<protein>
    <recommendedName>
        <fullName evidence="3">Defensin 1</fullName>
    </recommendedName>
    <allergenName evidence="5">Ara h 12</allergenName>
</protein>
<name>DEF1_ARAHY</name>
<sequence length="71" mass="7909">KTVAGFCIFFLVLFLAQEGVVKTEAKLCNHLADTYRGPCFTNASCDDHCKNKEHFVSGTCMKMACWCAHNC</sequence>
<proteinExistence type="evidence at protein level"/>
<reference key="1">
    <citation type="submission" date="2007-11" db="EMBL/GenBank/DDBJ databases">
        <title>Isolation of peanut seed-specific genes by analysis of expressed sequence.</title>
        <authorList>
            <person name="Yin H."/>
            <person name="Cai N.B."/>
            <person name="Huang X.W."/>
            <person name="Luo B.M."/>
            <person name="Li W.X."/>
            <person name="Zhuang W.J."/>
        </authorList>
    </citation>
    <scope>NUCLEOTIDE SEQUENCE [MRNA]</scope>
</reference>
<reference key="2">
    <citation type="journal article" date="2015" name="J. Allergy Clin. Immunol.">
        <title>Peanut defensins: Novel allergens isolated from lipophilic peanut extract.</title>
        <authorList>
            <person name="Petersen A."/>
            <person name="Kull S."/>
            <person name="Rennert S."/>
            <person name="Becker W.M."/>
            <person name="Krause S."/>
            <person name="Ernst M."/>
            <person name="Gutsmann T."/>
            <person name="Bauer J."/>
            <person name="Lindner B."/>
            <person name="Jappe U."/>
        </authorList>
    </citation>
    <scope>PROTEIN SEQUENCE OF 26-71</scope>
    <scope>PROBABLE FUNCTION</scope>
    <scope>PROBABLE DIMERIZATION</scope>
    <scope>LACK OF GLYCOSYLATION</scope>
    <scope>PRESENCE OF DISULFIDE BONDS</scope>
    <scope>MASS SPECTROMETRY</scope>
    <scope>ALLERGEN</scope>
    <scope>IDENTIFICATION BY MASS SPECTROMETRY</scope>
</reference>
<organism>
    <name type="scientific">Arachis hypogaea</name>
    <name type="common">Peanut</name>
    <dbReference type="NCBI Taxonomy" id="3818"/>
    <lineage>
        <taxon>Eukaryota</taxon>
        <taxon>Viridiplantae</taxon>
        <taxon>Streptophyta</taxon>
        <taxon>Embryophyta</taxon>
        <taxon>Tracheophyta</taxon>
        <taxon>Spermatophyta</taxon>
        <taxon>Magnoliopsida</taxon>
        <taxon>eudicotyledons</taxon>
        <taxon>Gunneridae</taxon>
        <taxon>Pentapetalae</taxon>
        <taxon>rosids</taxon>
        <taxon>fabids</taxon>
        <taxon>Fabales</taxon>
        <taxon>Fabaceae</taxon>
        <taxon>Papilionoideae</taxon>
        <taxon>50 kb inversion clade</taxon>
        <taxon>dalbergioids sensu lato</taxon>
        <taxon>Dalbergieae</taxon>
        <taxon>Pterocarpus clade</taxon>
        <taxon>Arachis</taxon>
    </lineage>
</organism>
<accession>B3EWP3</accession>
<feature type="signal peptide" evidence="2">
    <location>
        <begin position="1" status="less than"/>
        <end position="25"/>
    </location>
</feature>
<feature type="chain" id="PRO_0000435958" description="Defensin 1" evidence="2">
    <location>
        <begin position="26"/>
        <end position="71"/>
    </location>
</feature>
<feature type="disulfide bond" evidence="1">
    <location>
        <begin position="28"/>
        <end position="71"/>
    </location>
</feature>
<feature type="disulfide bond" evidence="1">
    <location>
        <begin position="39"/>
        <end position="60"/>
    </location>
</feature>
<feature type="disulfide bond" evidence="1">
    <location>
        <begin position="45"/>
        <end position="65"/>
    </location>
</feature>
<feature type="non-terminal residue" evidence="4">
    <location>
        <position position="1"/>
    </location>
</feature>